<feature type="signal peptide" evidence="2">
    <location>
        <begin position="1"/>
        <end position="29"/>
    </location>
</feature>
<feature type="chain" id="PRO_0000045476" description="Bifunctional autolysin">
    <location>
        <begin position="30"/>
        <end position="1257"/>
    </location>
</feature>
<feature type="domain" description="GW 1" evidence="3">
    <location>
        <begin position="444"/>
        <end position="518"/>
    </location>
</feature>
<feature type="domain" description="GW 2" evidence="3">
    <location>
        <begin position="520"/>
        <end position="594"/>
    </location>
</feature>
<feature type="domain" description="GW 3" evidence="3">
    <location>
        <begin position="613"/>
        <end position="687"/>
    </location>
</feature>
<feature type="domain" description="GW 4" evidence="3">
    <location>
        <begin position="689"/>
        <end position="763"/>
    </location>
</feature>
<feature type="domain" description="GW 5" evidence="3">
    <location>
        <begin position="785"/>
        <end position="860"/>
    </location>
</feature>
<feature type="domain" description="GW 6" evidence="3">
    <location>
        <begin position="862"/>
        <end position="937"/>
    </location>
</feature>
<feature type="domain" description="GW 7" evidence="3">
    <location>
        <begin position="944"/>
        <end position="1018"/>
    </location>
</feature>
<feature type="region of interest" description="Disordered" evidence="4">
    <location>
        <begin position="99"/>
        <end position="150"/>
    </location>
</feature>
<feature type="region of interest" description="Disordered" evidence="4">
    <location>
        <begin position="173"/>
        <end position="217"/>
    </location>
</feature>
<feature type="region of interest" description="N-acetylmuramoyl-L-alanine amidase">
    <location>
        <begin position="197"/>
        <end position="776"/>
    </location>
</feature>
<feature type="region of interest" description="Disordered" evidence="4">
    <location>
        <begin position="417"/>
        <end position="441"/>
    </location>
</feature>
<feature type="region of interest" description="Endo-beta-N-acetylglucosaminidase">
    <location>
        <begin position="777"/>
        <end position="1257"/>
    </location>
</feature>
<feature type="compositionally biased region" description="Polar residues" evidence="4">
    <location>
        <begin position="99"/>
        <end position="137"/>
    </location>
</feature>
<feature type="compositionally biased region" description="Low complexity" evidence="4">
    <location>
        <begin position="173"/>
        <end position="208"/>
    </location>
</feature>
<feature type="compositionally biased region" description="Low complexity" evidence="4">
    <location>
        <begin position="419"/>
        <end position="440"/>
    </location>
</feature>
<gene>
    <name type="primary">atl</name>
    <name type="synonym">nag</name>
    <name type="ordered locus">SAR1026</name>
</gene>
<comment type="function">
    <text evidence="1">Endohydrolysis of the di-N-acetylchitobiosyl unit in high-mannose glycopeptides and glycoproteins containing the -[(Man)5(GlcNAc)2]-Asn structure. One N-acetyl-D-glucosamine residue remains attached to the protein; the rest of the oligosaccharide is released intact. Cleaves the peptidoglycan connecting the daughter cells at the end of the cell division cycle, resulting in the separation of the two newly divided cells. Acts as an autolysin in penicillin-induced lysis (By similarity).</text>
</comment>
<comment type="catalytic activity">
    <reaction>
        <text>Hydrolyzes the link between N-acetylmuramoyl residues and L-amino acid residues in certain cell-wall glycopeptides.</text>
        <dbReference type="EC" id="3.5.1.28"/>
    </reaction>
</comment>
<comment type="catalytic activity">
    <reaction>
        <text>an N(4)-(oligosaccharide-(1-&gt;3)-[oligosaccharide-(1-&gt;6)]-beta-D-Man-(1-&gt;4)-beta-D-GlcNAc-(1-&gt;4)-alpha-D-GlcNAc)-L-asparaginyl-[protein] + H2O = an oligosaccharide-(1-&gt;3)-[oligosaccharide-(1-&gt;6)]-beta-D-Man-(1-&gt;4)-D-GlcNAc + N(4)-(N-acetyl-beta-D-glucosaminyl)-L-asparaginyl-[protein]</text>
        <dbReference type="Rhea" id="RHEA:73067"/>
        <dbReference type="Rhea" id="RHEA-COMP:12603"/>
        <dbReference type="Rhea" id="RHEA-COMP:18176"/>
        <dbReference type="ChEBI" id="CHEBI:15377"/>
        <dbReference type="ChEBI" id="CHEBI:132248"/>
        <dbReference type="ChEBI" id="CHEBI:192714"/>
        <dbReference type="ChEBI" id="CHEBI:192715"/>
        <dbReference type="EC" id="3.2.1.96"/>
    </reaction>
</comment>
<comment type="subunit">
    <text evidence="1">Oligomer; forms a ring structure at the cell surface which is important for efficient partitioning of daughter cells after cell division.</text>
</comment>
<comment type="subcellular location">
    <subcellularLocation>
        <location evidence="1">Secreted</location>
    </subcellularLocation>
    <text evidence="1">Secreted, and then anchored on the cell surface at the peripheral cell wall above the completed septum (septal region), for the next cell division cycle.</text>
</comment>
<comment type="domain">
    <text evidence="1">The GW domains are responsible for directing the proteins to the septal region.</text>
</comment>
<comment type="PTM">
    <text evidence="1">Undergoes proteolytic processing to generate the two extracellular lytic enzymes, probably at the septal region on the cell surface.</text>
</comment>
<comment type="similarity">
    <text evidence="5">In the N-terminal section; belongs to the N-acetylmuramoyl-L-alanine amidase 2 family.</text>
</comment>
<comment type="similarity">
    <text evidence="5">In the C-terminal section; belongs to the glycosyl hydrolase 73 family.</text>
</comment>
<sequence>MAKKFNYKLPSMVALTLVGSAVTAHQVQAAETTQDQTTNKNVLDSNKVKATTEQAKAEVKNPTQNISGTQVYQDPAIVQPKAANKTGNAQVNQKVDTTQVNGDTRATQSTTSNNAKPVTKSTNTTAPKTNNNVTSAGYSLVDDEDDNSENQINPELIKSAAKPAALETQYKAAAPKATPVAPKAKTEATPKVTTFSASAQPRSAAAAPKTSLPKYKPQVNSSINDYIRKNNLKAPKIEEDYTSYFPKYAYRNGVGRPEGIVVHDTANDRSTINGEISYMKNNYQNAFVHAFVDGDRIIETAPTDYLSWGVGAVGNPRFINVEIVHTHDYASFARSMNNYADYAATQLQYYGLKPDSAEYDGNGTVWTHYAVSKYLGGTDHADPHGYLRSHNYSYDQLYDLINEKYLIKMGKVAPWGTQSTTTPTTPSKPSTPSKPSTPSTGKLTVAANNGVAQIKPTNSGLYTTVYDKTGKATNEVQKTFAVSKTATLGNQKFYLVQDYNSGNKFGWVKEGDVVYNTAKSPVNVNQSYSIKPGTKLYTVPWGTSKQVAGSVSGSGNQTFKASKQQQIDKSIYLYGSVNGKSGWVSKAYLVDTAKPTPTPTPKPSTPTTNNKLTVSSLNGVAQINAKNNGLFTTVYDKTGKPTKEVQKTFAVTKEASLGGNKFYLVKDYNSPTLIGWVKQGDVIYNNAKSPVNVMQTYTVKPGTKLYSVPWGTYKQEAGAVSGTGNQTFKATKQQQIDKSIYLYGTVNGKSGWISKAYLAVPAAPKKAVAQPKTAVKAYAVTKPQTTQTVSKIAQVKPNNTGIRASVYEKTAKNGAKYADRTFYVTKERAHGNETYVLLNNTSHNIPLGWFNVKDLNVQNLGKEVKTTQKYTVNRSNNGLSMVPWGTKNQVILTGNNIAQGTFNATKQVSVGKDVYLYGTINNRTGWVNSKDLTAPTAVKPTTSAAKDYNYTYVIKNGNGYYYVTPNSDTAKYSLKAFNEQPFAVVKEQVINGQTWYYGKLSNGKLAWIKSTDLAKELIKYNQIGMTLNQVAQIQAGLQYKPQVQRVPGKWTDANFNDVKHAMDTKRLAQDPALKYQFLRLDQPQNISIDKINQFLKGKGVLENQGAAFNKAAQMYGINEVYLISHALLETGNGTSQLAKGADVVNNKVVTNSNTKYHNVFGIAAYDNDPLREGIKYAKQAGWDTVSKAIVGGAKFIGNSYVKAGQNTLYKMRWNPAHPGTHQYATDVDWANINAKIIKGYYDKIGEVGKYFDIPQYK</sequence>
<protein>
    <recommendedName>
        <fullName>Bifunctional autolysin</fullName>
    </recommendedName>
    <domain>
        <recommendedName>
            <fullName>N-acetylmuramoyl-L-alanine amidase</fullName>
            <ecNumber>3.5.1.28</ecNumber>
        </recommendedName>
    </domain>
    <domain>
        <recommendedName>
            <fullName>Mannosyl-glycoprotein endo-beta-N-acetylglucosaminidase</fullName>
            <ecNumber>3.2.1.96</ecNumber>
        </recommendedName>
    </domain>
</protein>
<accession>Q6GI31</accession>
<proteinExistence type="inferred from homology"/>
<keyword id="KW-0961">Cell wall biogenesis/degradation</keyword>
<keyword id="KW-0378">Hydrolase</keyword>
<keyword id="KW-0511">Multifunctional enzyme</keyword>
<keyword id="KW-0677">Repeat</keyword>
<keyword id="KW-0964">Secreted</keyword>
<keyword id="KW-0732">Signal</keyword>
<dbReference type="EC" id="3.5.1.28"/>
<dbReference type="EC" id="3.2.1.96"/>
<dbReference type="EMBL" id="BX571856">
    <property type="protein sequence ID" value="CAG40030.1"/>
    <property type="molecule type" value="Genomic_DNA"/>
</dbReference>
<dbReference type="RefSeq" id="WP_001074519.1">
    <property type="nucleotide sequence ID" value="NC_002952.2"/>
</dbReference>
<dbReference type="SMR" id="Q6GI31"/>
<dbReference type="CAZy" id="GH73">
    <property type="family name" value="Glycoside Hydrolase Family 73"/>
</dbReference>
<dbReference type="KEGG" id="sar:SAR1026"/>
<dbReference type="HOGENOM" id="CLU_005906_0_0_9"/>
<dbReference type="Proteomes" id="UP000000596">
    <property type="component" value="Chromosome"/>
</dbReference>
<dbReference type="GO" id="GO:0005576">
    <property type="term" value="C:extracellular region"/>
    <property type="evidence" value="ECO:0007669"/>
    <property type="project" value="UniProtKB-SubCell"/>
</dbReference>
<dbReference type="GO" id="GO:0004040">
    <property type="term" value="F:amidase activity"/>
    <property type="evidence" value="ECO:0007669"/>
    <property type="project" value="InterPro"/>
</dbReference>
<dbReference type="GO" id="GO:0033925">
    <property type="term" value="F:mannosyl-glycoprotein endo-beta-N-acetylglucosaminidase activity"/>
    <property type="evidence" value="ECO:0007669"/>
    <property type="project" value="UniProtKB-EC"/>
</dbReference>
<dbReference type="GO" id="GO:0008745">
    <property type="term" value="F:N-acetylmuramoyl-L-alanine amidase activity"/>
    <property type="evidence" value="ECO:0007669"/>
    <property type="project" value="UniProtKB-EC"/>
</dbReference>
<dbReference type="GO" id="GO:0071555">
    <property type="term" value="P:cell wall organization"/>
    <property type="evidence" value="ECO:0007669"/>
    <property type="project" value="UniProtKB-KW"/>
</dbReference>
<dbReference type="GO" id="GO:0009253">
    <property type="term" value="P:peptidoglycan catabolic process"/>
    <property type="evidence" value="ECO:0007669"/>
    <property type="project" value="InterPro"/>
</dbReference>
<dbReference type="CDD" id="cd06583">
    <property type="entry name" value="PGRP"/>
    <property type="match status" value="1"/>
</dbReference>
<dbReference type="Gene3D" id="1.10.530.10">
    <property type="match status" value="1"/>
</dbReference>
<dbReference type="Gene3D" id="2.30.30.170">
    <property type="match status" value="7"/>
</dbReference>
<dbReference type="Gene3D" id="3.40.80.10">
    <property type="entry name" value="Peptidoglycan recognition protein-like"/>
    <property type="match status" value="1"/>
</dbReference>
<dbReference type="InterPro" id="IPR036505">
    <property type="entry name" value="Amidase/PGRP_sf"/>
</dbReference>
<dbReference type="InterPro" id="IPR002502">
    <property type="entry name" value="Amidase_domain"/>
</dbReference>
<dbReference type="InterPro" id="IPR025987">
    <property type="entry name" value="GW_dom"/>
</dbReference>
<dbReference type="InterPro" id="IPR038200">
    <property type="entry name" value="GW_dom_sf"/>
</dbReference>
<dbReference type="InterPro" id="IPR002901">
    <property type="entry name" value="MGlyc_endo_b_GlcNAc-like_dom"/>
</dbReference>
<dbReference type="Pfam" id="PF01510">
    <property type="entry name" value="Amidase_2"/>
    <property type="match status" value="1"/>
</dbReference>
<dbReference type="Pfam" id="PF01832">
    <property type="entry name" value="Glucosaminidase"/>
    <property type="match status" value="1"/>
</dbReference>
<dbReference type="Pfam" id="PF13457">
    <property type="entry name" value="GW"/>
    <property type="match status" value="6"/>
</dbReference>
<dbReference type="SMART" id="SM00644">
    <property type="entry name" value="Ami_2"/>
    <property type="match status" value="1"/>
</dbReference>
<dbReference type="SMART" id="SM00047">
    <property type="entry name" value="LYZ2"/>
    <property type="match status" value="1"/>
</dbReference>
<dbReference type="SUPFAM" id="SSF55846">
    <property type="entry name" value="N-acetylmuramoyl-L-alanine amidase-like"/>
    <property type="match status" value="1"/>
</dbReference>
<dbReference type="SUPFAM" id="SSF82057">
    <property type="entry name" value="Prokaryotic SH3-related domain"/>
    <property type="match status" value="1"/>
</dbReference>
<dbReference type="PROSITE" id="PS51780">
    <property type="entry name" value="GW"/>
    <property type="match status" value="7"/>
</dbReference>
<reference key="1">
    <citation type="journal article" date="2004" name="Proc. Natl. Acad. Sci. U.S.A.">
        <title>Complete genomes of two clinical Staphylococcus aureus strains: evidence for the rapid evolution of virulence and drug resistance.</title>
        <authorList>
            <person name="Holden M.T.G."/>
            <person name="Feil E.J."/>
            <person name="Lindsay J.A."/>
            <person name="Peacock S.J."/>
            <person name="Day N.P.J."/>
            <person name="Enright M.C."/>
            <person name="Foster T.J."/>
            <person name="Moore C.E."/>
            <person name="Hurst L."/>
            <person name="Atkin R."/>
            <person name="Barron A."/>
            <person name="Bason N."/>
            <person name="Bentley S.D."/>
            <person name="Chillingworth C."/>
            <person name="Chillingworth T."/>
            <person name="Churcher C."/>
            <person name="Clark L."/>
            <person name="Corton C."/>
            <person name="Cronin A."/>
            <person name="Doggett J."/>
            <person name="Dowd L."/>
            <person name="Feltwell T."/>
            <person name="Hance Z."/>
            <person name="Harris B."/>
            <person name="Hauser H."/>
            <person name="Holroyd S."/>
            <person name="Jagels K."/>
            <person name="James K.D."/>
            <person name="Lennard N."/>
            <person name="Line A."/>
            <person name="Mayes R."/>
            <person name="Moule S."/>
            <person name="Mungall K."/>
            <person name="Ormond D."/>
            <person name="Quail M.A."/>
            <person name="Rabbinowitsch E."/>
            <person name="Rutherford K.M."/>
            <person name="Sanders M."/>
            <person name="Sharp S."/>
            <person name="Simmonds M."/>
            <person name="Stevens K."/>
            <person name="Whitehead S."/>
            <person name="Barrell B.G."/>
            <person name="Spratt B.G."/>
            <person name="Parkhill J."/>
        </authorList>
    </citation>
    <scope>NUCLEOTIDE SEQUENCE [LARGE SCALE GENOMIC DNA]</scope>
    <source>
        <strain>MRSA252</strain>
    </source>
</reference>
<organism>
    <name type="scientific">Staphylococcus aureus (strain MRSA252)</name>
    <dbReference type="NCBI Taxonomy" id="282458"/>
    <lineage>
        <taxon>Bacteria</taxon>
        <taxon>Bacillati</taxon>
        <taxon>Bacillota</taxon>
        <taxon>Bacilli</taxon>
        <taxon>Bacillales</taxon>
        <taxon>Staphylococcaceae</taxon>
        <taxon>Staphylococcus</taxon>
    </lineage>
</organism>
<name>ATL_STAAR</name>
<evidence type="ECO:0000250" key="1"/>
<evidence type="ECO:0000255" key="2"/>
<evidence type="ECO:0000255" key="3">
    <source>
        <dbReference type="PROSITE-ProRule" id="PRU01116"/>
    </source>
</evidence>
<evidence type="ECO:0000256" key="4">
    <source>
        <dbReference type="SAM" id="MobiDB-lite"/>
    </source>
</evidence>
<evidence type="ECO:0000305" key="5"/>